<reference key="1">
    <citation type="journal article" date="2005" name="Nature">
        <title>Sequencing of Aspergillus nidulans and comparative analysis with A. fumigatus and A. oryzae.</title>
        <authorList>
            <person name="Galagan J.E."/>
            <person name="Calvo S.E."/>
            <person name="Cuomo C."/>
            <person name="Ma L.-J."/>
            <person name="Wortman J.R."/>
            <person name="Batzoglou S."/>
            <person name="Lee S.-I."/>
            <person name="Bastuerkmen M."/>
            <person name="Spevak C.C."/>
            <person name="Clutterbuck J."/>
            <person name="Kapitonov V."/>
            <person name="Jurka J."/>
            <person name="Scazzocchio C."/>
            <person name="Farman M.L."/>
            <person name="Butler J."/>
            <person name="Purcell S."/>
            <person name="Harris S."/>
            <person name="Braus G.H."/>
            <person name="Draht O."/>
            <person name="Busch S."/>
            <person name="D'Enfert C."/>
            <person name="Bouchier C."/>
            <person name="Goldman G.H."/>
            <person name="Bell-Pedersen D."/>
            <person name="Griffiths-Jones S."/>
            <person name="Doonan J.H."/>
            <person name="Yu J."/>
            <person name="Vienken K."/>
            <person name="Pain A."/>
            <person name="Freitag M."/>
            <person name="Selker E.U."/>
            <person name="Archer D.B."/>
            <person name="Penalva M.A."/>
            <person name="Oakley B.R."/>
            <person name="Momany M."/>
            <person name="Tanaka T."/>
            <person name="Kumagai T."/>
            <person name="Asai K."/>
            <person name="Machida M."/>
            <person name="Nierman W.C."/>
            <person name="Denning D.W."/>
            <person name="Caddick M.X."/>
            <person name="Hynes M."/>
            <person name="Paoletti M."/>
            <person name="Fischer R."/>
            <person name="Miller B.L."/>
            <person name="Dyer P.S."/>
            <person name="Sachs M.S."/>
            <person name="Osmani S.A."/>
            <person name="Birren B.W."/>
        </authorList>
    </citation>
    <scope>NUCLEOTIDE SEQUENCE [LARGE SCALE GENOMIC DNA]</scope>
    <source>
        <strain>FGSC A4 / ATCC 38163 / CBS 112.46 / NRRL 194 / M139</strain>
    </source>
</reference>
<reference key="2">
    <citation type="journal article" date="2009" name="Fungal Genet. Biol.">
        <title>The 2008 update of the Aspergillus nidulans genome annotation: a community effort.</title>
        <authorList>
            <person name="Wortman J.R."/>
            <person name="Gilsenan J.M."/>
            <person name="Joardar V."/>
            <person name="Deegan J."/>
            <person name="Clutterbuck J."/>
            <person name="Andersen M.R."/>
            <person name="Archer D."/>
            <person name="Bencina M."/>
            <person name="Braus G."/>
            <person name="Coutinho P."/>
            <person name="von Dohren H."/>
            <person name="Doonan J."/>
            <person name="Driessen A.J."/>
            <person name="Durek P."/>
            <person name="Espeso E."/>
            <person name="Fekete E."/>
            <person name="Flipphi M."/>
            <person name="Estrada C.G."/>
            <person name="Geysens S."/>
            <person name="Goldman G."/>
            <person name="de Groot P.W."/>
            <person name="Hansen K."/>
            <person name="Harris S.D."/>
            <person name="Heinekamp T."/>
            <person name="Helmstaedt K."/>
            <person name="Henrissat B."/>
            <person name="Hofmann G."/>
            <person name="Homan T."/>
            <person name="Horio T."/>
            <person name="Horiuchi H."/>
            <person name="James S."/>
            <person name="Jones M."/>
            <person name="Karaffa L."/>
            <person name="Karanyi Z."/>
            <person name="Kato M."/>
            <person name="Keller N."/>
            <person name="Kelly D.E."/>
            <person name="Kiel J.A."/>
            <person name="Kim J.M."/>
            <person name="van der Klei I.J."/>
            <person name="Klis F.M."/>
            <person name="Kovalchuk A."/>
            <person name="Krasevec N."/>
            <person name="Kubicek C.P."/>
            <person name="Liu B."/>
            <person name="Maccabe A."/>
            <person name="Meyer V."/>
            <person name="Mirabito P."/>
            <person name="Miskei M."/>
            <person name="Mos M."/>
            <person name="Mullins J."/>
            <person name="Nelson D.R."/>
            <person name="Nielsen J."/>
            <person name="Oakley B.R."/>
            <person name="Osmani S.A."/>
            <person name="Pakula T."/>
            <person name="Paszewski A."/>
            <person name="Paulsen I."/>
            <person name="Pilsyk S."/>
            <person name="Pocsi I."/>
            <person name="Punt P.J."/>
            <person name="Ram A.F."/>
            <person name="Ren Q."/>
            <person name="Robellet X."/>
            <person name="Robson G."/>
            <person name="Seiboth B."/>
            <person name="van Solingen P."/>
            <person name="Specht T."/>
            <person name="Sun J."/>
            <person name="Taheri-Talesh N."/>
            <person name="Takeshita N."/>
            <person name="Ussery D."/>
            <person name="vanKuyk P.A."/>
            <person name="Visser H."/>
            <person name="van de Vondervoort P.J."/>
            <person name="de Vries R.P."/>
            <person name="Walton J."/>
            <person name="Xiang X."/>
            <person name="Xiong Y."/>
            <person name="Zeng A.P."/>
            <person name="Brandt B.W."/>
            <person name="Cornell M.J."/>
            <person name="van den Hondel C.A."/>
            <person name="Visser J."/>
            <person name="Oliver S.G."/>
            <person name="Turner G."/>
        </authorList>
    </citation>
    <scope>GENOME REANNOTATION</scope>
    <source>
        <strain>FGSC A4 / ATCC 38163 / CBS 112.46 / NRRL 194 / M139</strain>
    </source>
</reference>
<gene>
    <name type="primary">pif1</name>
    <name type="ORF">AN6895</name>
</gene>
<dbReference type="EC" id="5.6.2.3" evidence="1"/>
<dbReference type="EMBL" id="BN001301">
    <property type="protein sequence ID" value="CBF71681.1"/>
    <property type="status" value="ALT_SEQ"/>
    <property type="molecule type" value="Genomic_DNA"/>
</dbReference>
<dbReference type="EMBL" id="AACD01000113">
    <property type="protein sequence ID" value="EAA58294.1"/>
    <property type="status" value="ALT_SEQ"/>
    <property type="molecule type" value="Genomic_DNA"/>
</dbReference>
<dbReference type="RefSeq" id="XP_664499.1">
    <property type="nucleotide sequence ID" value="XM_659407.1"/>
</dbReference>
<dbReference type="SMR" id="Q5AXT5"/>
<dbReference type="FunCoup" id="Q5AXT5">
    <property type="interactions" value="820"/>
</dbReference>
<dbReference type="STRING" id="227321.Q5AXT5"/>
<dbReference type="KEGG" id="ani:ANIA_06895"/>
<dbReference type="eggNOG" id="KOG0987">
    <property type="taxonomic scope" value="Eukaryota"/>
</dbReference>
<dbReference type="HOGENOM" id="CLU_001613_0_1_1"/>
<dbReference type="InParanoid" id="Q5AXT5"/>
<dbReference type="OrthoDB" id="432234at2759"/>
<dbReference type="Proteomes" id="UP000000560">
    <property type="component" value="Chromosome I"/>
</dbReference>
<dbReference type="GO" id="GO:0005739">
    <property type="term" value="C:mitochondrion"/>
    <property type="evidence" value="ECO:0000318"/>
    <property type="project" value="GO_Central"/>
</dbReference>
<dbReference type="GO" id="GO:0043596">
    <property type="term" value="C:nuclear replication fork"/>
    <property type="evidence" value="ECO:0000318"/>
    <property type="project" value="GO_Central"/>
</dbReference>
<dbReference type="GO" id="GO:0043139">
    <property type="term" value="F:5'-3' DNA helicase activity"/>
    <property type="evidence" value="ECO:0000318"/>
    <property type="project" value="GO_Central"/>
</dbReference>
<dbReference type="GO" id="GO:0005524">
    <property type="term" value="F:ATP binding"/>
    <property type="evidence" value="ECO:0007669"/>
    <property type="project" value="UniProtKB-UniRule"/>
</dbReference>
<dbReference type="GO" id="GO:0016887">
    <property type="term" value="F:ATP hydrolysis activity"/>
    <property type="evidence" value="ECO:0007669"/>
    <property type="project" value="InterPro"/>
</dbReference>
<dbReference type="GO" id="GO:0003697">
    <property type="term" value="F:single-stranded DNA binding"/>
    <property type="evidence" value="ECO:0000318"/>
    <property type="project" value="GO_Central"/>
</dbReference>
<dbReference type="GO" id="GO:0006310">
    <property type="term" value="P:DNA recombination"/>
    <property type="evidence" value="ECO:0007669"/>
    <property type="project" value="UniProtKB-UniRule"/>
</dbReference>
<dbReference type="GO" id="GO:0006281">
    <property type="term" value="P:DNA repair"/>
    <property type="evidence" value="ECO:0007669"/>
    <property type="project" value="UniProtKB-UniRule"/>
</dbReference>
<dbReference type="GO" id="GO:0000002">
    <property type="term" value="P:mitochondrial genome maintenance"/>
    <property type="evidence" value="ECO:0000318"/>
    <property type="project" value="GO_Central"/>
</dbReference>
<dbReference type="GO" id="GO:0071932">
    <property type="term" value="P:replication fork reversal"/>
    <property type="evidence" value="ECO:0000318"/>
    <property type="project" value="GO_Central"/>
</dbReference>
<dbReference type="GO" id="GO:0000723">
    <property type="term" value="P:telomere maintenance"/>
    <property type="evidence" value="ECO:0000318"/>
    <property type="project" value="GO_Central"/>
</dbReference>
<dbReference type="CDD" id="cd18037">
    <property type="entry name" value="DEXSc_Pif1_like"/>
    <property type="match status" value="1"/>
</dbReference>
<dbReference type="CDD" id="cd18809">
    <property type="entry name" value="SF1_C_RecD"/>
    <property type="match status" value="1"/>
</dbReference>
<dbReference type="FunFam" id="3.40.50.300:FF:001226">
    <property type="entry name" value="ATP-dependent DNA helicase PIF1"/>
    <property type="match status" value="1"/>
</dbReference>
<dbReference type="Gene3D" id="3.40.50.300">
    <property type="entry name" value="P-loop containing nucleotide triphosphate hydrolases"/>
    <property type="match status" value="1"/>
</dbReference>
<dbReference type="HAMAP" id="MF_03176">
    <property type="entry name" value="PIF1"/>
    <property type="match status" value="1"/>
</dbReference>
<dbReference type="InterPro" id="IPR003593">
    <property type="entry name" value="AAA+_ATPase"/>
</dbReference>
<dbReference type="InterPro" id="IPR010285">
    <property type="entry name" value="DNA_helicase_pif1-like_DEAD"/>
</dbReference>
<dbReference type="InterPro" id="IPR027417">
    <property type="entry name" value="P-loop_NTPase"/>
</dbReference>
<dbReference type="InterPro" id="IPR049163">
    <property type="entry name" value="Pif1-like_2B_dom"/>
</dbReference>
<dbReference type="InterPro" id="IPR051055">
    <property type="entry name" value="PIF1_helicase"/>
</dbReference>
<dbReference type="InterPro" id="IPR048293">
    <property type="entry name" value="PIF1_RRM3_pfh1"/>
</dbReference>
<dbReference type="PANTHER" id="PTHR47642">
    <property type="entry name" value="ATP-DEPENDENT DNA HELICASE"/>
    <property type="match status" value="1"/>
</dbReference>
<dbReference type="PANTHER" id="PTHR47642:SF5">
    <property type="entry name" value="ATP-DEPENDENT DNA HELICASE"/>
    <property type="match status" value="1"/>
</dbReference>
<dbReference type="Pfam" id="PF05970">
    <property type="entry name" value="PIF1"/>
    <property type="match status" value="1"/>
</dbReference>
<dbReference type="Pfam" id="PF21530">
    <property type="entry name" value="Pif1_2B_dom"/>
    <property type="match status" value="1"/>
</dbReference>
<dbReference type="SMART" id="SM00382">
    <property type="entry name" value="AAA"/>
    <property type="match status" value="1"/>
</dbReference>
<dbReference type="SUPFAM" id="SSF52540">
    <property type="entry name" value="P-loop containing nucleoside triphosphate hydrolases"/>
    <property type="match status" value="2"/>
</dbReference>
<sequence>MFKKAVKDHSAAAARPLQSTIPNSSGVASTKLPPPQSIGVKRKIELTSTKSTLGSLHSAVYFDENDFDDDDDLDFESPDPYIPPARIEKDSFREESFHAAKSNSTLSHKADSQSAVTVSKTNYESDIKYPDLPPVPPDDNPGPSSSALPWSSSPPSHFQKPAAPRTVPWRKQENNIITIDDEAKPETPARPAATAPWNKTASAIKEEQKELRRQNKKAQAQKTQSSTKHHMPRAQVAPIFLSQKHVLKAVVEKGQSIFFTGSAGTGKSVLMREIIKKLRDKYRKEPDRIAVTASTGLAACNIEGVTLHSFAGIGLGKEPVPELVKKIKKNQKARNRWLRTKVLVIDEVSMVDGDLFDKLEEIARLIRNNGRPFGGIQLVVTGDFFQLPPVPEGHNREAKFSFAAASWNTSIQHTILLTHVFRQRDPEFADMLNEMRLGKLSPRTIQAFKELSRPLDFHDALEATELFPTRAEVDNANSARMARLSGETMTFNAVDSGTIQDIQFREKLLSNCMAPQTIHLKKGSQVMLIKNMEDTLVNGSIGRVVAFMDEATFDFYVENENDFASGKFDEGDEDRAARARKKIKGMGHRDGGVTVTRKWPLVCFIQPDGTERHLLCQPESWKIELPNGEVQAQRQQVPLILAWALSIHKAQGQTLQRVKVDLGKVFEKGQAYVALSRATSKAGLQVLRFDPRKVMVHPKVIEFYRNLVHASDLIKSKQPPKPQRTISNGDEDVYIDELIAEAEAY</sequence>
<keyword id="KW-0067">ATP-binding</keyword>
<keyword id="KW-0227">DNA damage</keyword>
<keyword id="KW-0233">DNA recombination</keyword>
<keyword id="KW-0234">DNA repair</keyword>
<keyword id="KW-0238">DNA-binding</keyword>
<keyword id="KW-0347">Helicase</keyword>
<keyword id="KW-0378">Hydrolase</keyword>
<keyword id="KW-0413">Isomerase</keyword>
<keyword id="KW-0496">Mitochondrion</keyword>
<keyword id="KW-0547">Nucleotide-binding</keyword>
<keyword id="KW-0539">Nucleus</keyword>
<keyword id="KW-1185">Reference proteome</keyword>
<proteinExistence type="inferred from homology"/>
<evidence type="ECO:0000255" key="1">
    <source>
        <dbReference type="HAMAP-Rule" id="MF_03176"/>
    </source>
</evidence>
<evidence type="ECO:0000256" key="2">
    <source>
        <dbReference type="SAM" id="MobiDB-lite"/>
    </source>
</evidence>
<evidence type="ECO:0000305" key="3"/>
<protein>
    <recommendedName>
        <fullName evidence="1">ATP-dependent DNA helicase PIF1</fullName>
        <ecNumber evidence="1">5.6.2.3</ecNumber>
    </recommendedName>
    <alternativeName>
        <fullName evidence="1">DNA 5'-3' helicase PIF1</fullName>
    </alternativeName>
    <alternativeName>
        <fullName evidence="1">DNA repair and recombination helicase PIF1</fullName>
    </alternativeName>
</protein>
<name>PIF1_EMENI</name>
<organism>
    <name type="scientific">Emericella nidulans (strain FGSC A4 / ATCC 38163 / CBS 112.46 / NRRL 194 / M139)</name>
    <name type="common">Aspergillus nidulans</name>
    <dbReference type="NCBI Taxonomy" id="227321"/>
    <lineage>
        <taxon>Eukaryota</taxon>
        <taxon>Fungi</taxon>
        <taxon>Dikarya</taxon>
        <taxon>Ascomycota</taxon>
        <taxon>Pezizomycotina</taxon>
        <taxon>Eurotiomycetes</taxon>
        <taxon>Eurotiomycetidae</taxon>
        <taxon>Eurotiales</taxon>
        <taxon>Aspergillaceae</taxon>
        <taxon>Aspergillus</taxon>
        <taxon>Aspergillus subgen. Nidulantes</taxon>
    </lineage>
</organism>
<accession>Q5AXT5</accession>
<accession>C8V2X2</accession>
<feature type="chain" id="PRO_0000423709" description="ATP-dependent DNA helicase PIF1">
    <location>
        <begin position="1"/>
        <end position="745"/>
    </location>
</feature>
<feature type="DNA-binding region" evidence="1">
    <location>
        <begin position="670"/>
        <end position="689"/>
    </location>
</feature>
<feature type="region of interest" description="Disordered" evidence="2">
    <location>
        <begin position="1"/>
        <end position="39"/>
    </location>
</feature>
<feature type="region of interest" description="Disordered" evidence="2">
    <location>
        <begin position="96"/>
        <end position="173"/>
    </location>
</feature>
<feature type="region of interest" description="Disordered" evidence="2">
    <location>
        <begin position="180"/>
        <end position="199"/>
    </location>
</feature>
<feature type="region of interest" description="Disordered" evidence="2">
    <location>
        <begin position="208"/>
        <end position="231"/>
    </location>
</feature>
<feature type="compositionally biased region" description="Basic and acidic residues" evidence="2">
    <location>
        <begin position="1"/>
        <end position="10"/>
    </location>
</feature>
<feature type="compositionally biased region" description="Polar residues" evidence="2">
    <location>
        <begin position="17"/>
        <end position="28"/>
    </location>
</feature>
<feature type="compositionally biased region" description="Polar residues" evidence="2">
    <location>
        <begin position="101"/>
        <end position="122"/>
    </location>
</feature>
<feature type="compositionally biased region" description="Pro residues" evidence="2">
    <location>
        <begin position="131"/>
        <end position="140"/>
    </location>
</feature>
<feature type="compositionally biased region" description="Low complexity" evidence="2">
    <location>
        <begin position="141"/>
        <end position="156"/>
    </location>
</feature>
<feature type="compositionally biased region" description="Polar residues" evidence="2">
    <location>
        <begin position="217"/>
        <end position="226"/>
    </location>
</feature>
<feature type="binding site" evidence="1">
    <location>
        <begin position="261"/>
        <end position="268"/>
    </location>
    <ligand>
        <name>ATP</name>
        <dbReference type="ChEBI" id="CHEBI:30616"/>
    </ligand>
</feature>
<comment type="function">
    <text evidence="1">DNA-dependent ATPase and 5'-3' DNA helicase required for the maintenance of both mitochondrial and nuclear genome stability.</text>
</comment>
<comment type="catalytic activity">
    <reaction evidence="1">
        <text>Couples ATP hydrolysis with the unwinding of duplex DNA at the replication fork by translocating in the 5'-3' direction. This creates two antiparallel DNA single strands (ssDNA). The leading ssDNA polymer is the template for DNA polymerase III holoenzyme which synthesizes a continuous strand.</text>
        <dbReference type="EC" id="5.6.2.3"/>
    </reaction>
</comment>
<comment type="catalytic activity">
    <reaction evidence="1">
        <text>ATP + H2O = ADP + phosphate + H(+)</text>
        <dbReference type="Rhea" id="RHEA:13065"/>
        <dbReference type="ChEBI" id="CHEBI:15377"/>
        <dbReference type="ChEBI" id="CHEBI:15378"/>
        <dbReference type="ChEBI" id="CHEBI:30616"/>
        <dbReference type="ChEBI" id="CHEBI:43474"/>
        <dbReference type="ChEBI" id="CHEBI:456216"/>
        <dbReference type="EC" id="5.6.2.3"/>
    </reaction>
</comment>
<comment type="cofactor">
    <cofactor evidence="1">
        <name>Mg(2+)</name>
        <dbReference type="ChEBI" id="CHEBI:18420"/>
    </cofactor>
</comment>
<comment type="subunit">
    <text evidence="1">Monomer.</text>
</comment>
<comment type="subcellular location">
    <subcellularLocation>
        <location evidence="1">Nucleus</location>
    </subcellularLocation>
    <subcellularLocation>
        <location evidence="1">Mitochondrion</location>
    </subcellularLocation>
</comment>
<comment type="similarity">
    <text evidence="1">Belongs to the helicase family. PIF1 subfamily.</text>
</comment>
<comment type="sequence caution" evidence="3">
    <conflict type="erroneous gene model prediction">
        <sequence resource="EMBL-CDS" id="CBF71681"/>
    </conflict>
</comment>
<comment type="sequence caution" evidence="3">
    <conflict type="erroneous gene model prediction">
        <sequence resource="EMBL-CDS" id="EAA58294"/>
    </conflict>
</comment>